<protein>
    <recommendedName>
        <fullName evidence="1">D-aminoacyl-tRNA deacylase</fullName>
        <ecNumber evidence="1">3.1.1.96</ecNumber>
    </recommendedName>
    <alternativeName>
        <fullName>D-tyrosyl-tRNA(Tyr) deacylase</fullName>
    </alternativeName>
</protein>
<sequence>MHLIVASRSDPASVRMLDYLTEKYTFSEKGGVLNHGDFDLVIIEDRHIFHDMSLSGKYDYLVVLSRHSSAADVKSLTAHPTGNFGPSADLGGKPRTINISCPRVMSGTLRRMMESYSGSRFEVTFEATHHGPIFDIPNYYVEIGTTENEWNDPEALSTTVDSVMNPDVRDYDAFVGVGGGHYAPKIKEYFRENSVNIGHIISKHDHDALEPWEIDMAVKRTPGCKGFIMDRKGTRGNVREMVKKYADENSLELITI</sequence>
<keyword id="KW-0378">Hydrolase</keyword>
<keyword id="KW-0479">Metal-binding</keyword>
<keyword id="KW-1185">Reference proteome</keyword>
<keyword id="KW-0862">Zinc</keyword>
<reference key="1">
    <citation type="journal article" date="2000" name="Nature">
        <title>The genome sequence of the thermoacidophilic scavenger Thermoplasma acidophilum.</title>
        <authorList>
            <person name="Ruepp A."/>
            <person name="Graml W."/>
            <person name="Santos-Martinez M.-L."/>
            <person name="Koretke K.K."/>
            <person name="Volker C."/>
            <person name="Mewes H.-W."/>
            <person name="Frishman D."/>
            <person name="Stocker S."/>
            <person name="Lupas A.N."/>
            <person name="Baumeister W."/>
        </authorList>
    </citation>
    <scope>NUCLEOTIDE SEQUENCE [LARGE SCALE GENOMIC DNA]</scope>
    <source>
        <strain>ATCC 25905 / DSM 1728 / JCM 9062 / NBRC 15155 / AMRC-C165</strain>
    </source>
</reference>
<gene>
    <name evidence="1" type="primary">dtdA</name>
    <name type="ordered locus">Ta0022</name>
</gene>
<comment type="function">
    <text evidence="1">D-aminoacyl-tRNA deacylase with broad substrate specificity. By recycling D-aminoacyl-tRNA to D-amino acids and free tRNA molecules, this enzyme counteracts the toxicity associated with the formation of D-aminoacyl-tRNA entities in vivo.</text>
</comment>
<comment type="catalytic activity">
    <reaction evidence="1">
        <text>a D-aminoacyl-tRNA + H2O = a tRNA + a D-alpha-amino acid + H(+)</text>
        <dbReference type="Rhea" id="RHEA:13953"/>
        <dbReference type="Rhea" id="RHEA-COMP:10123"/>
        <dbReference type="Rhea" id="RHEA-COMP:10124"/>
        <dbReference type="ChEBI" id="CHEBI:15377"/>
        <dbReference type="ChEBI" id="CHEBI:15378"/>
        <dbReference type="ChEBI" id="CHEBI:59871"/>
        <dbReference type="ChEBI" id="CHEBI:78442"/>
        <dbReference type="ChEBI" id="CHEBI:79333"/>
        <dbReference type="EC" id="3.1.1.96"/>
    </reaction>
</comment>
<comment type="catalytic activity">
    <reaction evidence="1">
        <text>glycyl-tRNA(Ala) + H2O = tRNA(Ala) + glycine + H(+)</text>
        <dbReference type="Rhea" id="RHEA:53744"/>
        <dbReference type="Rhea" id="RHEA-COMP:9657"/>
        <dbReference type="Rhea" id="RHEA-COMP:13640"/>
        <dbReference type="ChEBI" id="CHEBI:15377"/>
        <dbReference type="ChEBI" id="CHEBI:15378"/>
        <dbReference type="ChEBI" id="CHEBI:57305"/>
        <dbReference type="ChEBI" id="CHEBI:78442"/>
        <dbReference type="ChEBI" id="CHEBI:78522"/>
        <dbReference type="EC" id="3.1.1.96"/>
    </reaction>
</comment>
<comment type="cofactor">
    <cofactor evidence="1">
        <name>Zn(2+)</name>
        <dbReference type="ChEBI" id="CHEBI:29105"/>
    </cofactor>
    <text evidence="1">Binds 2 Zn(2+) ions per subunit.</text>
</comment>
<comment type="subunit">
    <text evidence="1">Monomer.</text>
</comment>
<comment type="similarity">
    <text evidence="1">Belongs to the DtdA deacylase family.</text>
</comment>
<evidence type="ECO:0000255" key="1">
    <source>
        <dbReference type="HAMAP-Rule" id="MF_00562"/>
    </source>
</evidence>
<feature type="chain" id="PRO_0000158976" description="D-aminoacyl-tRNA deacylase">
    <location>
        <begin position="1"/>
        <end position="256"/>
    </location>
</feature>
<proteinExistence type="inferred from homology"/>
<organism>
    <name type="scientific">Thermoplasma acidophilum (strain ATCC 25905 / DSM 1728 / JCM 9062 / NBRC 15155 / AMRC-C165)</name>
    <dbReference type="NCBI Taxonomy" id="273075"/>
    <lineage>
        <taxon>Archaea</taxon>
        <taxon>Methanobacteriati</taxon>
        <taxon>Thermoplasmatota</taxon>
        <taxon>Thermoplasmata</taxon>
        <taxon>Thermoplasmatales</taxon>
        <taxon>Thermoplasmataceae</taxon>
        <taxon>Thermoplasma</taxon>
    </lineage>
</organism>
<accession>Q9HM47</accession>
<name>DTDA_THEAC</name>
<dbReference type="EC" id="3.1.1.96" evidence="1"/>
<dbReference type="EMBL" id="AL445063">
    <property type="protein sequence ID" value="CAC11171.1"/>
    <property type="molecule type" value="Genomic_DNA"/>
</dbReference>
<dbReference type="RefSeq" id="WP_010900450.1">
    <property type="nucleotide sequence ID" value="NC_002578.1"/>
</dbReference>
<dbReference type="SMR" id="Q9HM47"/>
<dbReference type="FunCoup" id="Q9HM47">
    <property type="interactions" value="3"/>
</dbReference>
<dbReference type="STRING" id="273075.gene:9571238"/>
<dbReference type="PaxDb" id="273075-Ta0022"/>
<dbReference type="EnsemblBacteria" id="CAC11171">
    <property type="protein sequence ID" value="CAC11171"/>
    <property type="gene ID" value="CAC11171"/>
</dbReference>
<dbReference type="KEGG" id="tac:Ta0022"/>
<dbReference type="eggNOG" id="arCOG01616">
    <property type="taxonomic scope" value="Archaea"/>
</dbReference>
<dbReference type="HOGENOM" id="CLU_056464_1_0_2"/>
<dbReference type="InParanoid" id="Q9HM47"/>
<dbReference type="OrthoDB" id="9863at2157"/>
<dbReference type="Proteomes" id="UP000001024">
    <property type="component" value="Chromosome"/>
</dbReference>
<dbReference type="GO" id="GO:0051499">
    <property type="term" value="F:D-aminoacyl-tRNA deacylase activity"/>
    <property type="evidence" value="ECO:0007669"/>
    <property type="project" value="UniProtKB-UniRule"/>
</dbReference>
<dbReference type="GO" id="GO:0008270">
    <property type="term" value="F:zinc ion binding"/>
    <property type="evidence" value="ECO:0007669"/>
    <property type="project" value="UniProtKB-UniRule"/>
</dbReference>
<dbReference type="GO" id="GO:0019478">
    <property type="term" value="P:D-amino acid catabolic process"/>
    <property type="evidence" value="ECO:0007669"/>
    <property type="project" value="UniProtKB-UniRule"/>
</dbReference>
<dbReference type="Gene3D" id="3.40.50.10700">
    <property type="entry name" value="AF0625-like"/>
    <property type="match status" value="1"/>
</dbReference>
<dbReference type="Gene3D" id="3.40.630.50">
    <property type="entry name" value="AF0625-like"/>
    <property type="match status" value="1"/>
</dbReference>
<dbReference type="HAMAP" id="MF_00562">
    <property type="entry name" value="Deacylase_DtdA"/>
    <property type="match status" value="1"/>
</dbReference>
<dbReference type="InterPro" id="IPR018033">
    <property type="entry name" value="Deacylase_DtdA_archaea"/>
</dbReference>
<dbReference type="InterPro" id="IPR007508">
    <property type="entry name" value="DtdA"/>
</dbReference>
<dbReference type="NCBIfam" id="NF003072">
    <property type="entry name" value="PRK03995.1-4"/>
    <property type="match status" value="1"/>
</dbReference>
<dbReference type="PANTHER" id="PTHR34667">
    <property type="entry name" value="D-AMINOACYL-TRNA DEACYLASE"/>
    <property type="match status" value="1"/>
</dbReference>
<dbReference type="PANTHER" id="PTHR34667:SF1">
    <property type="entry name" value="D-AMINOACYL-TRNA DEACYLASE"/>
    <property type="match status" value="1"/>
</dbReference>
<dbReference type="Pfam" id="PF04414">
    <property type="entry name" value="tRNA_deacylase"/>
    <property type="match status" value="1"/>
</dbReference>
<dbReference type="PIRSF" id="PIRSF016210">
    <property type="entry name" value="UCP016210"/>
    <property type="match status" value="1"/>
</dbReference>
<dbReference type="SUPFAM" id="SSF142535">
    <property type="entry name" value="AF0625-like"/>
    <property type="match status" value="1"/>
</dbReference>